<keyword id="KW-0007">Acetylation</keyword>
<keyword id="KW-0010">Activator</keyword>
<keyword id="KW-0114">cAMP</keyword>
<keyword id="KW-0116">cAMP-binding</keyword>
<keyword id="KW-0238">DNA-binding</keyword>
<keyword id="KW-0547">Nucleotide-binding</keyword>
<keyword id="KW-1185">Reference proteome</keyword>
<keyword id="KW-0804">Transcription</keyword>
<keyword id="KW-0805">Transcription regulation</keyword>
<organism>
    <name type="scientific">Escherichia coli O157:H7</name>
    <dbReference type="NCBI Taxonomy" id="83334"/>
    <lineage>
        <taxon>Bacteria</taxon>
        <taxon>Pseudomonadati</taxon>
        <taxon>Pseudomonadota</taxon>
        <taxon>Gammaproteobacteria</taxon>
        <taxon>Enterobacterales</taxon>
        <taxon>Enterobacteriaceae</taxon>
        <taxon>Escherichia</taxon>
    </lineage>
</organism>
<comment type="function">
    <text evidence="1">A global transcription regulator. Complexes with cyclic AMP (cAMP) which allosterically activates DNA binding to regulate transcription. It can act as an activator, repressor, coactivator or corepressor. Induces a severe bend in DNA. Acts as a negative regulator of its own synthesis as well as for adenylate cyclase (cyaA), which generates cAMP. Plays a major role in carbon catabolite repression (CCR) (By similarity).</text>
</comment>
<comment type="subunit">
    <text evidence="1">Homodimer, which upon binding cAMP is able to bind DNA. Binds the N- and C-terminus of RNA polymerase subunit RpoA and sigma-70 (RpoD) (By similarity).</text>
</comment>
<comment type="domain">
    <text evidence="1">The N-terminal domain binds cAMP and is responsible for homodimerization, while the C-terminal domain binds DNA when cAMP is bound.</text>
</comment>
<name>CRP_ECO57</name>
<evidence type="ECO:0000250" key="1"/>
<evidence type="ECO:0000255" key="2">
    <source>
        <dbReference type="PROSITE-ProRule" id="PRU00387"/>
    </source>
</evidence>
<feature type="chain" id="PRO_0000100145" description="cAMP-activated global transcriptional regulator CRP">
    <location>
        <begin position="1"/>
        <end position="210"/>
    </location>
</feature>
<feature type="domain" description="HTH crp-type" evidence="2">
    <location>
        <begin position="138"/>
        <end position="210"/>
    </location>
</feature>
<feature type="DNA-binding region" description="H-T-H motif" evidence="2">
    <location>
        <begin position="180"/>
        <end position="186"/>
    </location>
</feature>
<feature type="region of interest" description="Activating region 2 (AR2); probably contacts the N-terminus of RpoA" evidence="1">
    <location>
        <begin position="20"/>
        <end position="22"/>
    </location>
</feature>
<feature type="region of interest" description="Activating region 3 (AR3); probably contacts sigma-70 (RpoD)" evidence="1">
    <location>
        <begin position="53"/>
        <end position="59"/>
    </location>
</feature>
<feature type="region of interest" description="Activating region 1 (AR1); probably contacts the C-terminus of RpoA" evidence="1">
    <location>
        <begin position="154"/>
        <end position="163"/>
    </location>
</feature>
<feature type="binding site" evidence="1">
    <location>
        <begin position="57"/>
        <end position="63"/>
    </location>
    <ligand>
        <name>3',5'-cyclic AMP</name>
        <dbReference type="ChEBI" id="CHEBI:58165"/>
        <label>1</label>
    </ligand>
</feature>
<feature type="binding site" evidence="1">
    <location>
        <begin position="72"/>
        <end position="74"/>
    </location>
    <ligand>
        <name>3',5'-cyclic AMP</name>
        <dbReference type="ChEBI" id="CHEBI:58165"/>
        <label>1</label>
    </ligand>
</feature>
<feature type="binding site" evidence="1">
    <location>
        <begin position="83"/>
        <end position="84"/>
    </location>
    <ligand>
        <name>3',5'-cyclic AMP</name>
        <dbReference type="ChEBI" id="CHEBI:58165"/>
        <label>1</label>
    </ligand>
</feature>
<feature type="binding site" evidence="1">
    <location>
        <begin position="128"/>
        <end position="129"/>
    </location>
    <ligand>
        <name>3',5'-cyclic AMP</name>
        <dbReference type="ChEBI" id="CHEBI:58165"/>
        <label>1</label>
    </ligand>
</feature>
<feature type="binding site" evidence="1">
    <location>
        <begin position="136"/>
        <end position="137"/>
    </location>
    <ligand>
        <name>3',5'-cyclic AMP</name>
        <dbReference type="ChEBI" id="CHEBI:58165"/>
        <label>2</label>
    </ligand>
</feature>
<feature type="binding site" evidence="1">
    <location>
        <begin position="171"/>
        <end position="181"/>
    </location>
    <ligand>
        <name>3',5'-cyclic AMP</name>
        <dbReference type="ChEBI" id="CHEBI:58165"/>
        <label>2</label>
    </ligand>
</feature>
<feature type="site" description="Activating region 2 (AR2); probably contacts the N-terminus of RpoA" evidence="1">
    <location>
        <position position="97"/>
    </location>
</feature>
<feature type="site" description="Activating region 2 (AR2); probably contacts the N-terminus of RpoA" evidence="1">
    <location>
        <position position="102"/>
    </location>
</feature>
<feature type="modified residue" description="N6-acetyllysine" evidence="1">
    <location>
        <position position="101"/>
    </location>
</feature>
<gene>
    <name type="primary">crp</name>
    <name type="ordered locus">Z4718</name>
    <name type="ordered locus">ECs4208</name>
</gene>
<reference key="1">
    <citation type="journal article" date="2001" name="Nature">
        <title>Genome sequence of enterohaemorrhagic Escherichia coli O157:H7.</title>
        <authorList>
            <person name="Perna N.T."/>
            <person name="Plunkett G. III"/>
            <person name="Burland V."/>
            <person name="Mau B."/>
            <person name="Glasner J.D."/>
            <person name="Rose D.J."/>
            <person name="Mayhew G.F."/>
            <person name="Evans P.S."/>
            <person name="Gregor J."/>
            <person name="Kirkpatrick H.A."/>
            <person name="Posfai G."/>
            <person name="Hackett J."/>
            <person name="Klink S."/>
            <person name="Boutin A."/>
            <person name="Shao Y."/>
            <person name="Miller L."/>
            <person name="Grotbeck E.J."/>
            <person name="Davis N.W."/>
            <person name="Lim A."/>
            <person name="Dimalanta E.T."/>
            <person name="Potamousis K."/>
            <person name="Apodaca J."/>
            <person name="Anantharaman T.S."/>
            <person name="Lin J."/>
            <person name="Yen G."/>
            <person name="Schwartz D.C."/>
            <person name="Welch R.A."/>
            <person name="Blattner F.R."/>
        </authorList>
    </citation>
    <scope>NUCLEOTIDE SEQUENCE [LARGE SCALE GENOMIC DNA]</scope>
    <source>
        <strain>O157:H7 / EDL933 / ATCC 700927 / EHEC</strain>
    </source>
</reference>
<reference key="2">
    <citation type="journal article" date="2001" name="DNA Res.">
        <title>Complete genome sequence of enterohemorrhagic Escherichia coli O157:H7 and genomic comparison with a laboratory strain K-12.</title>
        <authorList>
            <person name="Hayashi T."/>
            <person name="Makino K."/>
            <person name="Ohnishi M."/>
            <person name="Kurokawa K."/>
            <person name="Ishii K."/>
            <person name="Yokoyama K."/>
            <person name="Han C.-G."/>
            <person name="Ohtsubo E."/>
            <person name="Nakayama K."/>
            <person name="Murata T."/>
            <person name="Tanaka M."/>
            <person name="Tobe T."/>
            <person name="Iida T."/>
            <person name="Takami H."/>
            <person name="Honda T."/>
            <person name="Sasakawa C."/>
            <person name="Ogasawara N."/>
            <person name="Yasunaga T."/>
            <person name="Kuhara S."/>
            <person name="Shiba T."/>
            <person name="Hattori M."/>
            <person name="Shinagawa H."/>
        </authorList>
    </citation>
    <scope>NUCLEOTIDE SEQUENCE [LARGE SCALE GENOMIC DNA]</scope>
    <source>
        <strain>O157:H7 / Sakai / RIMD 0509952 / EHEC</strain>
    </source>
</reference>
<proteinExistence type="inferred from homology"/>
<sequence length="210" mass="23640">MVLGKPQTDPTLEWFLSHCHIHKYPSKSTLIHQGEKAETLYYIVKGSVAVLIKDEEGKEMILSYLNQGDFIGELGLFEEGQERSAWVRAKTACEVAEISYKKFRQLIQVNPDILMRLSAQMARRLQVTSEKVGNLAFLDVTGRIAQTLLNLAKQPDAMTHPDGMQIKITRQEIGQIVGCSRETVGRILKMLEDQNLISAHGKTIVVYGTR</sequence>
<accession>P0ACK0</accession>
<accession>P03020</accession>
<protein>
    <recommendedName>
        <fullName>cAMP-activated global transcriptional regulator CRP</fullName>
    </recommendedName>
    <alternativeName>
        <fullName>Catabolite activator protein</fullName>
        <shortName>CAP</shortName>
    </alternativeName>
    <alternativeName>
        <fullName>Catabolite gene activator</fullName>
    </alternativeName>
    <alternativeName>
        <fullName>cAMP receptor protein</fullName>
        <shortName>CRP</shortName>
    </alternativeName>
    <alternativeName>
        <fullName>cAMP regulatory protein</fullName>
    </alternativeName>
</protein>
<dbReference type="EMBL" id="AE005174">
    <property type="protein sequence ID" value="AAG58465.1"/>
    <property type="molecule type" value="Genomic_DNA"/>
</dbReference>
<dbReference type="EMBL" id="BA000007">
    <property type="protein sequence ID" value="BAB37631.1"/>
    <property type="molecule type" value="Genomic_DNA"/>
</dbReference>
<dbReference type="PIR" id="E86000">
    <property type="entry name" value="E86000"/>
</dbReference>
<dbReference type="PIR" id="H91154">
    <property type="entry name" value="H91154"/>
</dbReference>
<dbReference type="RefSeq" id="NP_312235.1">
    <property type="nucleotide sequence ID" value="NC_002695.1"/>
</dbReference>
<dbReference type="RefSeq" id="WP_000242755.1">
    <property type="nucleotide sequence ID" value="NZ_VOAI01000004.1"/>
</dbReference>
<dbReference type="BMRB" id="P0ACK0"/>
<dbReference type="EMDB" id="EMD-20286"/>
<dbReference type="EMDB" id="EMD-20287"/>
<dbReference type="EMDB" id="EMD-20288"/>
<dbReference type="EMDB" id="EMD-7059"/>
<dbReference type="SMR" id="P0ACK0"/>
<dbReference type="STRING" id="155864.Z4718"/>
<dbReference type="GeneID" id="915936"/>
<dbReference type="GeneID" id="93122175"/>
<dbReference type="KEGG" id="ece:Z4718"/>
<dbReference type="KEGG" id="ecs:ECs_4208"/>
<dbReference type="PATRIC" id="fig|386585.9.peg.4392"/>
<dbReference type="eggNOG" id="COG0664">
    <property type="taxonomic scope" value="Bacteria"/>
</dbReference>
<dbReference type="HOGENOM" id="CLU_075053_3_5_6"/>
<dbReference type="OMA" id="KTMVVYG"/>
<dbReference type="Proteomes" id="UP000000558">
    <property type="component" value="Chromosome"/>
</dbReference>
<dbReference type="Proteomes" id="UP000002519">
    <property type="component" value="Chromosome"/>
</dbReference>
<dbReference type="GO" id="GO:0005829">
    <property type="term" value="C:cytosol"/>
    <property type="evidence" value="ECO:0007669"/>
    <property type="project" value="TreeGrafter"/>
</dbReference>
<dbReference type="GO" id="GO:0030552">
    <property type="term" value="F:cAMP binding"/>
    <property type="evidence" value="ECO:0007669"/>
    <property type="project" value="UniProtKB-KW"/>
</dbReference>
<dbReference type="GO" id="GO:0003677">
    <property type="term" value="F:DNA binding"/>
    <property type="evidence" value="ECO:0007669"/>
    <property type="project" value="UniProtKB-KW"/>
</dbReference>
<dbReference type="GO" id="GO:0003700">
    <property type="term" value="F:DNA-binding transcription factor activity"/>
    <property type="evidence" value="ECO:0007669"/>
    <property type="project" value="InterPro"/>
</dbReference>
<dbReference type="CDD" id="cd00038">
    <property type="entry name" value="CAP_ED"/>
    <property type="match status" value="1"/>
</dbReference>
<dbReference type="CDD" id="cd00092">
    <property type="entry name" value="HTH_CRP"/>
    <property type="match status" value="1"/>
</dbReference>
<dbReference type="FunFam" id="1.10.10.10:FF:000006">
    <property type="entry name" value="cAMP-activated global transcriptional regulator CRP"/>
    <property type="match status" value="1"/>
</dbReference>
<dbReference type="FunFam" id="2.60.120.10:FF:000001">
    <property type="entry name" value="cAMP-activated global transcriptional regulator CRP"/>
    <property type="match status" value="1"/>
</dbReference>
<dbReference type="Gene3D" id="2.60.120.10">
    <property type="entry name" value="Jelly Rolls"/>
    <property type="match status" value="1"/>
</dbReference>
<dbReference type="Gene3D" id="1.10.10.10">
    <property type="entry name" value="Winged helix-like DNA-binding domain superfamily/Winged helix DNA-binding domain"/>
    <property type="match status" value="1"/>
</dbReference>
<dbReference type="InterPro" id="IPR018488">
    <property type="entry name" value="cNMP-bd_CS"/>
</dbReference>
<dbReference type="InterPro" id="IPR000595">
    <property type="entry name" value="cNMP-bd_dom"/>
</dbReference>
<dbReference type="InterPro" id="IPR018490">
    <property type="entry name" value="cNMP-bd_dom_sf"/>
</dbReference>
<dbReference type="InterPro" id="IPR050397">
    <property type="entry name" value="Env_Response_Regulators"/>
</dbReference>
<dbReference type="InterPro" id="IPR012318">
    <property type="entry name" value="HTH_CRP"/>
</dbReference>
<dbReference type="InterPro" id="IPR014710">
    <property type="entry name" value="RmlC-like_jellyroll"/>
</dbReference>
<dbReference type="InterPro" id="IPR018335">
    <property type="entry name" value="Tscrpt_reg_HTH_Crp-type_CS"/>
</dbReference>
<dbReference type="InterPro" id="IPR036388">
    <property type="entry name" value="WH-like_DNA-bd_sf"/>
</dbReference>
<dbReference type="InterPro" id="IPR036390">
    <property type="entry name" value="WH_DNA-bd_sf"/>
</dbReference>
<dbReference type="NCBIfam" id="NF008732">
    <property type="entry name" value="PRK11753.1"/>
    <property type="match status" value="1"/>
</dbReference>
<dbReference type="PANTHER" id="PTHR24567">
    <property type="entry name" value="CRP FAMILY TRANSCRIPTIONAL REGULATORY PROTEIN"/>
    <property type="match status" value="1"/>
</dbReference>
<dbReference type="PANTHER" id="PTHR24567:SF68">
    <property type="entry name" value="DNA-BINDING TRANSCRIPTIONAL DUAL REGULATOR CRP"/>
    <property type="match status" value="1"/>
</dbReference>
<dbReference type="Pfam" id="PF00027">
    <property type="entry name" value="cNMP_binding"/>
    <property type="match status" value="1"/>
</dbReference>
<dbReference type="Pfam" id="PF13545">
    <property type="entry name" value="HTH_Crp_2"/>
    <property type="match status" value="1"/>
</dbReference>
<dbReference type="PRINTS" id="PR00034">
    <property type="entry name" value="HTHCRP"/>
</dbReference>
<dbReference type="SMART" id="SM00100">
    <property type="entry name" value="cNMP"/>
    <property type="match status" value="1"/>
</dbReference>
<dbReference type="SMART" id="SM00419">
    <property type="entry name" value="HTH_CRP"/>
    <property type="match status" value="1"/>
</dbReference>
<dbReference type="SUPFAM" id="SSF51206">
    <property type="entry name" value="cAMP-binding domain-like"/>
    <property type="match status" value="1"/>
</dbReference>
<dbReference type="SUPFAM" id="SSF46785">
    <property type="entry name" value="Winged helix' DNA-binding domain"/>
    <property type="match status" value="1"/>
</dbReference>
<dbReference type="PROSITE" id="PS00888">
    <property type="entry name" value="CNMP_BINDING_1"/>
    <property type="match status" value="1"/>
</dbReference>
<dbReference type="PROSITE" id="PS00889">
    <property type="entry name" value="CNMP_BINDING_2"/>
    <property type="match status" value="1"/>
</dbReference>
<dbReference type="PROSITE" id="PS50042">
    <property type="entry name" value="CNMP_BINDING_3"/>
    <property type="match status" value="1"/>
</dbReference>
<dbReference type="PROSITE" id="PS00042">
    <property type="entry name" value="HTH_CRP_1"/>
    <property type="match status" value="1"/>
</dbReference>
<dbReference type="PROSITE" id="PS51063">
    <property type="entry name" value="HTH_CRP_2"/>
    <property type="match status" value="1"/>
</dbReference>